<sequence length="689" mass="76771">MARQYPLKKTRNIGIMAHIDAGKTTTTERILYYTGRVHKMGEVHDGAAVMDWMEQEQERGITITSAATTCEWQKHRINIIDTPGHVDFTVEVERSLRVLDGAIALFCAVGGVEPQSETVWRQADKYQVPRIAFVNKMDRMGADFFHVIEMMEDRLGANAVPLQIPIGSEDDFEGIVDLVTMDAVVYKDDLGVKYERVDIPEDYREQAEEYRENLLEAISELDDEIMMKYLEGEEITTDELKTALRKGVLDVEIVPVLCGSAFKNKGVQLLLDAVIDYLPSPVDVPPVEGMNPDTEEEEIRKAGDDEPFSALAFKIMADPYVGKLTFFRVYSGVLEAGSYVYNSTKGHKERIGRILQMHANHREERESVHAGDLAAAVGLKNTATGDTLCDEDHPIVLESMEFPEPVISVAIEPKSQAEQDKLSLALQRLAEEDPTFKVRTDEETGQTIIRGMGELHLEVIVDRLLREFKVDANIGRPQVAYRETITRKVTDVEGKFIRQSGGRGQYGHVIIDIEPLEEGEGFEFVNKIVGGAIPKEYIPAVEDGIVEAMENGVLAGYPAVDLKITLKDGSYHEVDSSEMAFKIAGSIAFKEGAQKASPVILEPIMDVEVVVPEEYMGDVIGDLNGRRGNVQGMERRASAQVVKAYVPLAEMFGYATDLRSKTQGRATYTMQFSHYEPVPDNIAKEIIGK</sequence>
<accession>B8D0C1</accession>
<dbReference type="EMBL" id="CP001098">
    <property type="protein sequence ID" value="ACL68875.1"/>
    <property type="molecule type" value="Genomic_DNA"/>
</dbReference>
<dbReference type="RefSeq" id="WP_012635074.1">
    <property type="nucleotide sequence ID" value="NC_011899.1"/>
</dbReference>
<dbReference type="SMR" id="B8D0C1"/>
<dbReference type="STRING" id="373903.Hore_01140"/>
<dbReference type="KEGG" id="hor:Hore_01140"/>
<dbReference type="eggNOG" id="COG0480">
    <property type="taxonomic scope" value="Bacteria"/>
</dbReference>
<dbReference type="HOGENOM" id="CLU_002794_4_1_9"/>
<dbReference type="OrthoDB" id="9804431at2"/>
<dbReference type="Proteomes" id="UP000000719">
    <property type="component" value="Chromosome"/>
</dbReference>
<dbReference type="GO" id="GO:0005737">
    <property type="term" value="C:cytoplasm"/>
    <property type="evidence" value="ECO:0007669"/>
    <property type="project" value="UniProtKB-SubCell"/>
</dbReference>
<dbReference type="GO" id="GO:0005525">
    <property type="term" value="F:GTP binding"/>
    <property type="evidence" value="ECO:0007669"/>
    <property type="project" value="UniProtKB-UniRule"/>
</dbReference>
<dbReference type="GO" id="GO:0003924">
    <property type="term" value="F:GTPase activity"/>
    <property type="evidence" value="ECO:0007669"/>
    <property type="project" value="InterPro"/>
</dbReference>
<dbReference type="GO" id="GO:0003746">
    <property type="term" value="F:translation elongation factor activity"/>
    <property type="evidence" value="ECO:0007669"/>
    <property type="project" value="UniProtKB-UniRule"/>
</dbReference>
<dbReference type="GO" id="GO:0032790">
    <property type="term" value="P:ribosome disassembly"/>
    <property type="evidence" value="ECO:0007669"/>
    <property type="project" value="TreeGrafter"/>
</dbReference>
<dbReference type="CDD" id="cd01886">
    <property type="entry name" value="EF-G"/>
    <property type="match status" value="1"/>
</dbReference>
<dbReference type="CDD" id="cd16262">
    <property type="entry name" value="EFG_III"/>
    <property type="match status" value="1"/>
</dbReference>
<dbReference type="CDD" id="cd01434">
    <property type="entry name" value="EFG_mtEFG1_IV"/>
    <property type="match status" value="1"/>
</dbReference>
<dbReference type="CDD" id="cd03713">
    <property type="entry name" value="EFG_mtEFG_C"/>
    <property type="match status" value="1"/>
</dbReference>
<dbReference type="CDD" id="cd04088">
    <property type="entry name" value="EFG_mtEFG_II"/>
    <property type="match status" value="1"/>
</dbReference>
<dbReference type="FunFam" id="2.40.30.10:FF:000006">
    <property type="entry name" value="Elongation factor G"/>
    <property type="match status" value="1"/>
</dbReference>
<dbReference type="FunFam" id="3.30.230.10:FF:000003">
    <property type="entry name" value="Elongation factor G"/>
    <property type="match status" value="1"/>
</dbReference>
<dbReference type="FunFam" id="3.30.70.240:FF:000001">
    <property type="entry name" value="Elongation factor G"/>
    <property type="match status" value="1"/>
</dbReference>
<dbReference type="FunFam" id="3.30.70.870:FF:000001">
    <property type="entry name" value="Elongation factor G"/>
    <property type="match status" value="1"/>
</dbReference>
<dbReference type="FunFam" id="3.40.50.300:FF:000029">
    <property type="entry name" value="Elongation factor G"/>
    <property type="match status" value="1"/>
</dbReference>
<dbReference type="Gene3D" id="3.30.230.10">
    <property type="match status" value="1"/>
</dbReference>
<dbReference type="Gene3D" id="3.30.70.240">
    <property type="match status" value="1"/>
</dbReference>
<dbReference type="Gene3D" id="3.30.70.870">
    <property type="entry name" value="Elongation Factor G (Translational Gtpase), domain 3"/>
    <property type="match status" value="1"/>
</dbReference>
<dbReference type="Gene3D" id="3.40.50.300">
    <property type="entry name" value="P-loop containing nucleotide triphosphate hydrolases"/>
    <property type="match status" value="1"/>
</dbReference>
<dbReference type="Gene3D" id="2.40.30.10">
    <property type="entry name" value="Translation factors"/>
    <property type="match status" value="1"/>
</dbReference>
<dbReference type="HAMAP" id="MF_00054_B">
    <property type="entry name" value="EF_G_EF_2_B"/>
    <property type="match status" value="1"/>
</dbReference>
<dbReference type="InterPro" id="IPR041095">
    <property type="entry name" value="EFG_II"/>
</dbReference>
<dbReference type="InterPro" id="IPR009022">
    <property type="entry name" value="EFG_III"/>
</dbReference>
<dbReference type="InterPro" id="IPR035647">
    <property type="entry name" value="EFG_III/V"/>
</dbReference>
<dbReference type="InterPro" id="IPR047872">
    <property type="entry name" value="EFG_IV"/>
</dbReference>
<dbReference type="InterPro" id="IPR035649">
    <property type="entry name" value="EFG_V"/>
</dbReference>
<dbReference type="InterPro" id="IPR000640">
    <property type="entry name" value="EFG_V-like"/>
</dbReference>
<dbReference type="InterPro" id="IPR004161">
    <property type="entry name" value="EFTu-like_2"/>
</dbReference>
<dbReference type="InterPro" id="IPR031157">
    <property type="entry name" value="G_TR_CS"/>
</dbReference>
<dbReference type="InterPro" id="IPR027417">
    <property type="entry name" value="P-loop_NTPase"/>
</dbReference>
<dbReference type="InterPro" id="IPR020568">
    <property type="entry name" value="Ribosomal_Su5_D2-typ_SF"/>
</dbReference>
<dbReference type="InterPro" id="IPR014721">
    <property type="entry name" value="Ribsml_uS5_D2-typ_fold_subgr"/>
</dbReference>
<dbReference type="InterPro" id="IPR005225">
    <property type="entry name" value="Small_GTP-bd"/>
</dbReference>
<dbReference type="InterPro" id="IPR000795">
    <property type="entry name" value="T_Tr_GTP-bd_dom"/>
</dbReference>
<dbReference type="InterPro" id="IPR009000">
    <property type="entry name" value="Transl_B-barrel_sf"/>
</dbReference>
<dbReference type="InterPro" id="IPR004540">
    <property type="entry name" value="Transl_elong_EFG/EF2"/>
</dbReference>
<dbReference type="InterPro" id="IPR005517">
    <property type="entry name" value="Transl_elong_EFG/EF2_IV"/>
</dbReference>
<dbReference type="NCBIfam" id="TIGR00484">
    <property type="entry name" value="EF-G"/>
    <property type="match status" value="1"/>
</dbReference>
<dbReference type="NCBIfam" id="NF009379">
    <property type="entry name" value="PRK12740.1-3"/>
    <property type="match status" value="1"/>
</dbReference>
<dbReference type="NCBIfam" id="NF009381">
    <property type="entry name" value="PRK12740.1-5"/>
    <property type="match status" value="1"/>
</dbReference>
<dbReference type="NCBIfam" id="NF009891">
    <property type="entry name" value="PRK13351.1-1"/>
    <property type="match status" value="1"/>
</dbReference>
<dbReference type="NCBIfam" id="TIGR00231">
    <property type="entry name" value="small_GTP"/>
    <property type="match status" value="1"/>
</dbReference>
<dbReference type="PANTHER" id="PTHR43261:SF1">
    <property type="entry name" value="RIBOSOME-RELEASING FACTOR 2, MITOCHONDRIAL"/>
    <property type="match status" value="1"/>
</dbReference>
<dbReference type="PANTHER" id="PTHR43261">
    <property type="entry name" value="TRANSLATION ELONGATION FACTOR G-RELATED"/>
    <property type="match status" value="1"/>
</dbReference>
<dbReference type="Pfam" id="PF00679">
    <property type="entry name" value="EFG_C"/>
    <property type="match status" value="1"/>
</dbReference>
<dbReference type="Pfam" id="PF14492">
    <property type="entry name" value="EFG_III"/>
    <property type="match status" value="1"/>
</dbReference>
<dbReference type="Pfam" id="PF03764">
    <property type="entry name" value="EFG_IV"/>
    <property type="match status" value="1"/>
</dbReference>
<dbReference type="Pfam" id="PF00009">
    <property type="entry name" value="GTP_EFTU"/>
    <property type="match status" value="1"/>
</dbReference>
<dbReference type="Pfam" id="PF03144">
    <property type="entry name" value="GTP_EFTU_D2"/>
    <property type="match status" value="1"/>
</dbReference>
<dbReference type="PRINTS" id="PR00315">
    <property type="entry name" value="ELONGATNFCT"/>
</dbReference>
<dbReference type="SMART" id="SM00838">
    <property type="entry name" value="EFG_C"/>
    <property type="match status" value="1"/>
</dbReference>
<dbReference type="SMART" id="SM00889">
    <property type="entry name" value="EFG_IV"/>
    <property type="match status" value="1"/>
</dbReference>
<dbReference type="SUPFAM" id="SSF54980">
    <property type="entry name" value="EF-G C-terminal domain-like"/>
    <property type="match status" value="2"/>
</dbReference>
<dbReference type="SUPFAM" id="SSF52540">
    <property type="entry name" value="P-loop containing nucleoside triphosphate hydrolases"/>
    <property type="match status" value="1"/>
</dbReference>
<dbReference type="SUPFAM" id="SSF54211">
    <property type="entry name" value="Ribosomal protein S5 domain 2-like"/>
    <property type="match status" value="1"/>
</dbReference>
<dbReference type="SUPFAM" id="SSF50447">
    <property type="entry name" value="Translation proteins"/>
    <property type="match status" value="1"/>
</dbReference>
<dbReference type="PROSITE" id="PS00301">
    <property type="entry name" value="G_TR_1"/>
    <property type="match status" value="1"/>
</dbReference>
<dbReference type="PROSITE" id="PS51722">
    <property type="entry name" value="G_TR_2"/>
    <property type="match status" value="1"/>
</dbReference>
<evidence type="ECO:0000255" key="1">
    <source>
        <dbReference type="HAMAP-Rule" id="MF_00054"/>
    </source>
</evidence>
<feature type="chain" id="PRO_1000201467" description="Elongation factor G">
    <location>
        <begin position="1"/>
        <end position="689"/>
    </location>
</feature>
<feature type="domain" description="tr-type G">
    <location>
        <begin position="8"/>
        <end position="282"/>
    </location>
</feature>
<feature type="binding site" evidence="1">
    <location>
        <begin position="17"/>
        <end position="24"/>
    </location>
    <ligand>
        <name>GTP</name>
        <dbReference type="ChEBI" id="CHEBI:37565"/>
    </ligand>
</feature>
<feature type="binding site" evidence="1">
    <location>
        <begin position="81"/>
        <end position="85"/>
    </location>
    <ligand>
        <name>GTP</name>
        <dbReference type="ChEBI" id="CHEBI:37565"/>
    </ligand>
</feature>
<feature type="binding site" evidence="1">
    <location>
        <begin position="135"/>
        <end position="138"/>
    </location>
    <ligand>
        <name>GTP</name>
        <dbReference type="ChEBI" id="CHEBI:37565"/>
    </ligand>
</feature>
<organism>
    <name type="scientific">Halothermothrix orenii (strain H 168 / OCM 544 / DSM 9562)</name>
    <dbReference type="NCBI Taxonomy" id="373903"/>
    <lineage>
        <taxon>Bacteria</taxon>
        <taxon>Bacillati</taxon>
        <taxon>Bacillota</taxon>
        <taxon>Clostridia</taxon>
        <taxon>Halanaerobiales</taxon>
        <taxon>Halothermotrichaceae</taxon>
        <taxon>Halothermothrix</taxon>
    </lineage>
</organism>
<comment type="function">
    <text evidence="1">Catalyzes the GTP-dependent ribosomal translocation step during translation elongation. During this step, the ribosome changes from the pre-translocational (PRE) to the post-translocational (POST) state as the newly formed A-site-bound peptidyl-tRNA and P-site-bound deacylated tRNA move to the P and E sites, respectively. Catalyzes the coordinated movement of the two tRNA molecules, the mRNA and conformational changes in the ribosome.</text>
</comment>
<comment type="subcellular location">
    <subcellularLocation>
        <location evidence="1">Cytoplasm</location>
    </subcellularLocation>
</comment>
<comment type="similarity">
    <text evidence="1">Belongs to the TRAFAC class translation factor GTPase superfamily. Classic translation factor GTPase family. EF-G/EF-2 subfamily.</text>
</comment>
<proteinExistence type="inferred from homology"/>
<reference key="1">
    <citation type="journal article" date="2009" name="PLoS ONE">
        <title>Genome analysis of the anaerobic thermohalophilic bacterium Halothermothrix orenii.</title>
        <authorList>
            <person name="Mavromatis K."/>
            <person name="Ivanova N."/>
            <person name="Anderson I."/>
            <person name="Lykidis A."/>
            <person name="Hooper S.D."/>
            <person name="Sun H."/>
            <person name="Kunin V."/>
            <person name="Lapidus A."/>
            <person name="Hugenholtz P."/>
            <person name="Patel B."/>
            <person name="Kyrpides N.C."/>
        </authorList>
    </citation>
    <scope>NUCLEOTIDE SEQUENCE [LARGE SCALE GENOMIC DNA]</scope>
    <source>
        <strain>H 168 / OCM 544 / DSM 9562</strain>
    </source>
</reference>
<gene>
    <name evidence="1" type="primary">fusA</name>
    <name type="ordered locus">Hore_01140</name>
</gene>
<keyword id="KW-0963">Cytoplasm</keyword>
<keyword id="KW-0251">Elongation factor</keyword>
<keyword id="KW-0342">GTP-binding</keyword>
<keyword id="KW-0547">Nucleotide-binding</keyword>
<keyword id="KW-0648">Protein biosynthesis</keyword>
<keyword id="KW-1185">Reference proteome</keyword>
<name>EFG_HALOH</name>
<protein>
    <recommendedName>
        <fullName evidence="1">Elongation factor G</fullName>
        <shortName evidence="1">EF-G</shortName>
    </recommendedName>
</protein>